<accession>Q033G3</accession>
<keyword id="KW-0520">NAD</keyword>
<keyword id="KW-0560">Oxidoreductase</keyword>
<organism>
    <name type="scientific">Lactococcus lactis subsp. cremoris (strain SK11)</name>
    <dbReference type="NCBI Taxonomy" id="272622"/>
    <lineage>
        <taxon>Bacteria</taxon>
        <taxon>Bacillati</taxon>
        <taxon>Bacillota</taxon>
        <taxon>Bacilli</taxon>
        <taxon>Lactobacillales</taxon>
        <taxon>Streptococcaceae</taxon>
        <taxon>Lactococcus</taxon>
        <taxon>Lactococcus cremoris subsp. cremoris</taxon>
    </lineage>
</organism>
<reference key="1">
    <citation type="journal article" date="2006" name="Proc. Natl. Acad. Sci. U.S.A.">
        <title>Comparative genomics of the lactic acid bacteria.</title>
        <authorList>
            <person name="Makarova K.S."/>
            <person name="Slesarev A."/>
            <person name="Wolf Y.I."/>
            <person name="Sorokin A."/>
            <person name="Mirkin B."/>
            <person name="Koonin E.V."/>
            <person name="Pavlov A."/>
            <person name="Pavlova N."/>
            <person name="Karamychev V."/>
            <person name="Polouchine N."/>
            <person name="Shakhova V."/>
            <person name="Grigoriev I."/>
            <person name="Lou Y."/>
            <person name="Rohksar D."/>
            <person name="Lucas S."/>
            <person name="Huang K."/>
            <person name="Goodstein D.M."/>
            <person name="Hawkins T."/>
            <person name="Plengvidhya V."/>
            <person name="Welker D."/>
            <person name="Hughes J."/>
            <person name="Goh Y."/>
            <person name="Benson A."/>
            <person name="Baldwin K."/>
            <person name="Lee J.-H."/>
            <person name="Diaz-Muniz I."/>
            <person name="Dosti B."/>
            <person name="Smeianov V."/>
            <person name="Wechter W."/>
            <person name="Barabote R."/>
            <person name="Lorca G."/>
            <person name="Altermann E."/>
            <person name="Barrangou R."/>
            <person name="Ganesan B."/>
            <person name="Xie Y."/>
            <person name="Rawsthorne H."/>
            <person name="Tamir D."/>
            <person name="Parker C."/>
            <person name="Breidt F."/>
            <person name="Broadbent J.R."/>
            <person name="Hutkins R."/>
            <person name="O'Sullivan D."/>
            <person name="Steele J."/>
            <person name="Unlu G."/>
            <person name="Saier M.H. Jr."/>
            <person name="Klaenhammer T."/>
            <person name="Richardson P."/>
            <person name="Kozyavkin S."/>
            <person name="Weimer B.C."/>
            <person name="Mills D.A."/>
        </authorList>
    </citation>
    <scope>NUCLEOTIDE SEQUENCE [LARGE SCALE GENOMIC DNA]</scope>
    <source>
        <strain>SK11</strain>
    </source>
</reference>
<gene>
    <name evidence="1" type="primary">mtlD</name>
    <name type="ordered locus">LACR_0030</name>
</gene>
<sequence length="388" mass="43993">MKKAVHFGAGNIGRGFIGEILSKNGFEIYFVDTNKAIIDELNTRHSYEIGIASSSPEKISVSGLFGINNGENPEDVIEAIAQADIVTKAIGPNILPYIAELVAKGIQKRKEENKQVQIDIIACENMIGGSEFLEKKVAEYLSDSDKVYLANYIGFPNAAVDRIVPGQKHEDLLYVEVEPFCEWVIDESQIKNKSFKLEGVHYANNLEPFIERKLFSVNSGHATVAYSSAYKGYKIILEGLQHKEILSALKGVQKETRALLLAKWPQYFTEEDLMSYHQMIISRFANPKIIDEVTRVARTPIRKLGYDERFIRPIRELNERGLSYQNHLDIVGKIFAYQDENDSQSVQLQEKLSTMDLQRLIEEVTGLSNKKIILEIELVIKKYKNDSK</sequence>
<name>MTLD_LACLS</name>
<proteinExistence type="inferred from homology"/>
<comment type="catalytic activity">
    <reaction evidence="1">
        <text>D-mannitol 1-phosphate + NAD(+) = beta-D-fructose 6-phosphate + NADH + H(+)</text>
        <dbReference type="Rhea" id="RHEA:19661"/>
        <dbReference type="ChEBI" id="CHEBI:15378"/>
        <dbReference type="ChEBI" id="CHEBI:57540"/>
        <dbReference type="ChEBI" id="CHEBI:57634"/>
        <dbReference type="ChEBI" id="CHEBI:57945"/>
        <dbReference type="ChEBI" id="CHEBI:61381"/>
        <dbReference type="EC" id="1.1.1.17"/>
    </reaction>
</comment>
<comment type="similarity">
    <text evidence="1">Belongs to the mannitol dehydrogenase family.</text>
</comment>
<protein>
    <recommendedName>
        <fullName evidence="1">Mannitol-1-phosphate 5-dehydrogenase</fullName>
        <ecNumber evidence="1">1.1.1.17</ecNumber>
    </recommendedName>
</protein>
<dbReference type="EC" id="1.1.1.17" evidence="1"/>
<dbReference type="EMBL" id="CP000425">
    <property type="protein sequence ID" value="ABJ71659.1"/>
    <property type="molecule type" value="Genomic_DNA"/>
</dbReference>
<dbReference type="RefSeq" id="WP_011675099.1">
    <property type="nucleotide sequence ID" value="NC_008527.1"/>
</dbReference>
<dbReference type="SMR" id="Q033G3"/>
<dbReference type="KEGG" id="llc:LACR_0030"/>
<dbReference type="HOGENOM" id="CLU_036089_2_0_9"/>
<dbReference type="Proteomes" id="UP000000240">
    <property type="component" value="Chromosome"/>
</dbReference>
<dbReference type="GO" id="GO:0005829">
    <property type="term" value="C:cytosol"/>
    <property type="evidence" value="ECO:0007669"/>
    <property type="project" value="TreeGrafter"/>
</dbReference>
<dbReference type="GO" id="GO:0008926">
    <property type="term" value="F:mannitol-1-phosphate 5-dehydrogenase activity"/>
    <property type="evidence" value="ECO:0007669"/>
    <property type="project" value="UniProtKB-UniRule"/>
</dbReference>
<dbReference type="GO" id="GO:0019592">
    <property type="term" value="P:mannitol catabolic process"/>
    <property type="evidence" value="ECO:0007669"/>
    <property type="project" value="TreeGrafter"/>
</dbReference>
<dbReference type="Gene3D" id="1.10.1040.10">
    <property type="entry name" value="N-(1-d-carboxylethyl)-l-norvaline Dehydrogenase, domain 2"/>
    <property type="match status" value="1"/>
</dbReference>
<dbReference type="Gene3D" id="3.40.50.720">
    <property type="entry name" value="NAD(P)-binding Rossmann-like Domain"/>
    <property type="match status" value="1"/>
</dbReference>
<dbReference type="HAMAP" id="MF_00196">
    <property type="entry name" value="Mannitol_dehydrog"/>
    <property type="match status" value="1"/>
</dbReference>
<dbReference type="InterPro" id="IPR008927">
    <property type="entry name" value="6-PGluconate_DH-like_C_sf"/>
</dbReference>
<dbReference type="InterPro" id="IPR013328">
    <property type="entry name" value="6PGD_dom2"/>
</dbReference>
<dbReference type="InterPro" id="IPR023028">
    <property type="entry name" value="Mannitol_1_phos_5_DH"/>
</dbReference>
<dbReference type="InterPro" id="IPR000669">
    <property type="entry name" value="Mannitol_DH"/>
</dbReference>
<dbReference type="InterPro" id="IPR013118">
    <property type="entry name" value="Mannitol_DH_C"/>
</dbReference>
<dbReference type="InterPro" id="IPR023027">
    <property type="entry name" value="Mannitol_DH_CS"/>
</dbReference>
<dbReference type="InterPro" id="IPR013131">
    <property type="entry name" value="Mannitol_DH_N"/>
</dbReference>
<dbReference type="InterPro" id="IPR036291">
    <property type="entry name" value="NAD(P)-bd_dom_sf"/>
</dbReference>
<dbReference type="NCBIfam" id="NF002647">
    <property type="entry name" value="PRK02318.1-3"/>
    <property type="match status" value="1"/>
</dbReference>
<dbReference type="NCBIfam" id="NF002652">
    <property type="entry name" value="PRK02318.2-5"/>
    <property type="match status" value="1"/>
</dbReference>
<dbReference type="PANTHER" id="PTHR30524:SF0">
    <property type="entry name" value="ALTRONATE OXIDOREDUCTASE-RELATED"/>
    <property type="match status" value="1"/>
</dbReference>
<dbReference type="PANTHER" id="PTHR30524">
    <property type="entry name" value="MANNITOL-1-PHOSPHATE 5-DEHYDROGENASE"/>
    <property type="match status" value="1"/>
</dbReference>
<dbReference type="Pfam" id="PF01232">
    <property type="entry name" value="Mannitol_dh"/>
    <property type="match status" value="1"/>
</dbReference>
<dbReference type="Pfam" id="PF08125">
    <property type="entry name" value="Mannitol_dh_C"/>
    <property type="match status" value="1"/>
</dbReference>
<dbReference type="PRINTS" id="PR00084">
    <property type="entry name" value="MTLDHDRGNASE"/>
</dbReference>
<dbReference type="SUPFAM" id="SSF48179">
    <property type="entry name" value="6-phosphogluconate dehydrogenase C-terminal domain-like"/>
    <property type="match status" value="1"/>
</dbReference>
<dbReference type="SUPFAM" id="SSF51735">
    <property type="entry name" value="NAD(P)-binding Rossmann-fold domains"/>
    <property type="match status" value="1"/>
</dbReference>
<dbReference type="PROSITE" id="PS00974">
    <property type="entry name" value="MANNITOL_DHGENASE"/>
    <property type="match status" value="1"/>
</dbReference>
<feature type="chain" id="PRO_1000011804" description="Mannitol-1-phosphate 5-dehydrogenase">
    <location>
        <begin position="1"/>
        <end position="388"/>
    </location>
</feature>
<feature type="binding site" evidence="1">
    <location>
        <begin position="4"/>
        <end position="15"/>
    </location>
    <ligand>
        <name>NAD(+)</name>
        <dbReference type="ChEBI" id="CHEBI:57540"/>
    </ligand>
</feature>
<evidence type="ECO:0000255" key="1">
    <source>
        <dbReference type="HAMAP-Rule" id="MF_00196"/>
    </source>
</evidence>